<dbReference type="EMBL" id="AAMC01088878">
    <property type="status" value="NOT_ANNOTATED_CDS"/>
    <property type="molecule type" value="Genomic_DNA"/>
</dbReference>
<dbReference type="SMR" id="F7EL49"/>
<dbReference type="FunCoup" id="F7EL49">
    <property type="interactions" value="590"/>
</dbReference>
<dbReference type="STRING" id="8364.ENSXETP00000042560"/>
<dbReference type="PaxDb" id="8364-ENSXETP00000063750"/>
<dbReference type="eggNOG" id="ENOG502R3HG">
    <property type="taxonomic scope" value="Eukaryota"/>
</dbReference>
<dbReference type="HOGENOM" id="CLU_014418_1_0_1"/>
<dbReference type="InParanoid" id="F7EL49"/>
<dbReference type="TreeFam" id="TF332622"/>
<dbReference type="Proteomes" id="UP000008143">
    <property type="component" value="Unplaced"/>
</dbReference>
<dbReference type="GO" id="GO:0070161">
    <property type="term" value="C:anchoring junction"/>
    <property type="evidence" value="ECO:0007669"/>
    <property type="project" value="UniProtKB-KW"/>
</dbReference>
<dbReference type="GO" id="GO:0042995">
    <property type="term" value="C:cell projection"/>
    <property type="evidence" value="ECO:0007669"/>
    <property type="project" value="UniProtKB-SubCell"/>
</dbReference>
<dbReference type="GO" id="GO:0005737">
    <property type="term" value="C:cytoplasm"/>
    <property type="evidence" value="ECO:0007669"/>
    <property type="project" value="UniProtKB-SubCell"/>
</dbReference>
<dbReference type="GO" id="GO:0002102">
    <property type="term" value="C:podosome"/>
    <property type="evidence" value="ECO:0007669"/>
    <property type="project" value="UniProtKB-SubCell"/>
</dbReference>
<dbReference type="GO" id="GO:0001725">
    <property type="term" value="C:stress fiber"/>
    <property type="evidence" value="ECO:0007669"/>
    <property type="project" value="UniProtKB-SubCell"/>
</dbReference>
<dbReference type="CDD" id="cd13306">
    <property type="entry name" value="PH1_AFAP"/>
    <property type="match status" value="1"/>
</dbReference>
<dbReference type="CDD" id="cd13307">
    <property type="entry name" value="PH2_AFAP"/>
    <property type="match status" value="1"/>
</dbReference>
<dbReference type="FunFam" id="2.30.29.30:FF:000189">
    <property type="entry name" value="Actin filament associated protein 1-like 1"/>
    <property type="match status" value="1"/>
</dbReference>
<dbReference type="FunFam" id="2.30.29.30:FF:000020">
    <property type="entry name" value="Actin filament-associated protein 1-like 2 isoform 1"/>
    <property type="match status" value="1"/>
</dbReference>
<dbReference type="Gene3D" id="2.30.29.30">
    <property type="entry name" value="Pleckstrin-homology domain (PH domain)/Phosphotyrosine-binding domain (PTB)"/>
    <property type="match status" value="2"/>
</dbReference>
<dbReference type="InterPro" id="IPR030113">
    <property type="entry name" value="AFAP"/>
</dbReference>
<dbReference type="InterPro" id="IPR011993">
    <property type="entry name" value="PH-like_dom_sf"/>
</dbReference>
<dbReference type="InterPro" id="IPR001849">
    <property type="entry name" value="PH_domain"/>
</dbReference>
<dbReference type="PANTHER" id="PTHR14338">
    <property type="entry name" value="ACTIN FILAMENT-ASSOCIATED PROTEIN 1 FAMILY MEMBER"/>
    <property type="match status" value="1"/>
</dbReference>
<dbReference type="PANTHER" id="PTHR14338:SF1">
    <property type="entry name" value="ACTIN FILAMENT-ASSOCIATED PROTEIN 1-LIKE 1"/>
    <property type="match status" value="1"/>
</dbReference>
<dbReference type="Pfam" id="PF00169">
    <property type="entry name" value="PH"/>
    <property type="match status" value="2"/>
</dbReference>
<dbReference type="SMART" id="SM00233">
    <property type="entry name" value="PH"/>
    <property type="match status" value="2"/>
</dbReference>
<dbReference type="SUPFAM" id="SSF50729">
    <property type="entry name" value="PH domain-like"/>
    <property type="match status" value="2"/>
</dbReference>
<dbReference type="PROSITE" id="PS50003">
    <property type="entry name" value="PH_DOMAIN"/>
    <property type="match status" value="2"/>
</dbReference>
<feature type="chain" id="PRO_0000416694" description="Actin filament-associated protein 1-like 1">
    <location>
        <begin position="1"/>
        <end position="758"/>
    </location>
</feature>
<feature type="domain" description="PH 1" evidence="4">
    <location>
        <begin position="216"/>
        <end position="312"/>
    </location>
</feature>
<feature type="domain" description="PH 2" evidence="4">
    <location>
        <begin position="409"/>
        <end position="503"/>
    </location>
</feature>
<feature type="region of interest" description="Disordered" evidence="5">
    <location>
        <begin position="91"/>
        <end position="194"/>
    </location>
</feature>
<feature type="region of interest" description="Disordered" evidence="5">
    <location>
        <begin position="335"/>
        <end position="369"/>
    </location>
</feature>
<feature type="region of interest" description="Disordered" evidence="5">
    <location>
        <begin position="692"/>
        <end position="758"/>
    </location>
</feature>
<feature type="coiled-coil region" evidence="3">
    <location>
        <begin position="602"/>
        <end position="690"/>
    </location>
</feature>
<feature type="compositionally biased region" description="Pro residues" evidence="5">
    <location>
        <begin position="102"/>
        <end position="120"/>
    </location>
</feature>
<feature type="compositionally biased region" description="Polar residues" evidence="5">
    <location>
        <begin position="137"/>
        <end position="148"/>
    </location>
</feature>
<feature type="compositionally biased region" description="Low complexity" evidence="5">
    <location>
        <begin position="177"/>
        <end position="186"/>
    </location>
</feature>
<feature type="compositionally biased region" description="Polar residues" evidence="5">
    <location>
        <begin position="342"/>
        <end position="356"/>
    </location>
</feature>
<feature type="compositionally biased region" description="Basic and acidic residues" evidence="5">
    <location>
        <begin position="749"/>
        <end position="758"/>
    </location>
</feature>
<accession>F7EL49</accession>
<reference key="1">
    <citation type="journal article" date="2010" name="Science">
        <title>The genome of the Western clawed frog Xenopus tropicalis.</title>
        <authorList>
            <person name="Hellsten U."/>
            <person name="Harland R.M."/>
            <person name="Gilchrist M.J."/>
            <person name="Hendrix D."/>
            <person name="Jurka J."/>
            <person name="Kapitonov V."/>
            <person name="Ovcharenko I."/>
            <person name="Putnam N.H."/>
            <person name="Shu S."/>
            <person name="Taher L."/>
            <person name="Blitz I.L."/>
            <person name="Blumberg B."/>
            <person name="Dichmann D.S."/>
            <person name="Dubchak I."/>
            <person name="Amaya E."/>
            <person name="Detter J.C."/>
            <person name="Fletcher R."/>
            <person name="Gerhard D.S."/>
            <person name="Goodstein D."/>
            <person name="Graves T."/>
            <person name="Grigoriev I.V."/>
            <person name="Grimwood J."/>
            <person name="Kawashima T."/>
            <person name="Lindquist E."/>
            <person name="Lucas S.M."/>
            <person name="Mead P.E."/>
            <person name="Mitros T."/>
            <person name="Ogino H."/>
            <person name="Ohta Y."/>
            <person name="Poliakov A.V."/>
            <person name="Pollet N."/>
            <person name="Robert J."/>
            <person name="Salamov A."/>
            <person name="Sater A.K."/>
            <person name="Schmutz J."/>
            <person name="Terry A."/>
            <person name="Vize P.D."/>
            <person name="Warren W.C."/>
            <person name="Wells D."/>
            <person name="Wills A."/>
            <person name="Wilson R.K."/>
            <person name="Zimmerman L.B."/>
            <person name="Zorn A.M."/>
            <person name="Grainger R."/>
            <person name="Grammer T."/>
            <person name="Khokha M.K."/>
            <person name="Richardson P.M."/>
            <person name="Rokhsar D.S."/>
        </authorList>
    </citation>
    <scope>NUCLEOTIDE SEQUENCE [LARGE SCALE GENOMIC DNA]</scope>
</reference>
<gene>
    <name type="primary">afap1l1</name>
</gene>
<protein>
    <recommendedName>
        <fullName>Actin filament-associated protein 1-like 1</fullName>
        <shortName>AFAP1-like protein 1</shortName>
    </recommendedName>
</protein>
<comment type="function">
    <text evidence="1">May be involved in podosome and invadosome formation.</text>
</comment>
<comment type="subcellular location">
    <subcellularLocation>
        <location evidence="2">Cytoplasm</location>
    </subcellularLocation>
    <subcellularLocation>
        <location evidence="2">Cell projection</location>
        <location evidence="2">Podosome</location>
    </subcellularLocation>
    <subcellularLocation>
        <location evidence="2">Cell projection</location>
        <location evidence="2">Invadopodium</location>
    </subcellularLocation>
    <subcellularLocation>
        <location evidence="2">Cytoplasm</location>
        <location evidence="2">Cytoskeleton</location>
        <location evidence="2">Stress fiber</location>
    </subcellularLocation>
</comment>
<sequence>MQERLRILDQLLPELNVLLRLLDHEFLSATTREKQSAVCSILRQLQPAPGDELDFQYMNTAAYHNGTSFVESLFEEFDCDLHDLHDMQDEYRDSSENLSCQLPPPPSAPPPPLPTTPPPEDYYEEAVPLGPGKFTEYITSRNSSSPPNSIEDGYYEEADNNYPMTRINGEQKNSYNESDGLSSSYESYDEEDEEGKAQRLMLQWPSQEASLHLVRDSRICAFLLRKKRFGQWAKQLTLIKDNKLLCYKSSKDRQPHLEIPLALCNVAYVPKDGRRKKHELRFSLPNGEMLVLAVQSREQAEEWLRVIKEVISPSTGSSPASPALRHRLDLDKRLSHDKTSDSDSAANGENSSLSSGKENRDTGKCRKGGLAELKGSMSRAAGKKITRIISFSKKKQSTEEHHTSSTEEEVPCCGYLSVLVNQCWKERWCCLKGHTLYFHKDRNDLRTHINAIALRGCEVSPGFGPLHPFAFRILRQSQEVTALEASCSEEMGRWLGLLLAQTGSKTKPEALHYDYVDVETIANIATAVRHSFLWATSSHSSTSDLRLYDDVSYEKVEDPKRAPGVAQVKRHASSCSEKSRRVESEVKVKRHASNANQYKYGKTRAEEDARKFIVEKEKLEKEKEAIRSKLIAMKRERRELKEMLKNCSGKQQKEMEERLAMLEEQCKNNEKVRVDLEIQLTEVKENLKKSLAGGPTLGLAVTGKSENPPQKSQQPRSPPDRLLPVNSAAEMRRRSPSIAASSKGKVLQKAKEWEKKKP</sequence>
<name>AF1L1_XENTR</name>
<keyword id="KW-0965">Cell junction</keyword>
<keyword id="KW-0966">Cell projection</keyword>
<keyword id="KW-0175">Coiled coil</keyword>
<keyword id="KW-0963">Cytoplasm</keyword>
<keyword id="KW-0206">Cytoskeleton</keyword>
<keyword id="KW-1185">Reference proteome</keyword>
<keyword id="KW-0677">Repeat</keyword>
<organism>
    <name type="scientific">Xenopus tropicalis</name>
    <name type="common">Western clawed frog</name>
    <name type="synonym">Silurana tropicalis</name>
    <dbReference type="NCBI Taxonomy" id="8364"/>
    <lineage>
        <taxon>Eukaryota</taxon>
        <taxon>Metazoa</taxon>
        <taxon>Chordata</taxon>
        <taxon>Craniata</taxon>
        <taxon>Vertebrata</taxon>
        <taxon>Euteleostomi</taxon>
        <taxon>Amphibia</taxon>
        <taxon>Batrachia</taxon>
        <taxon>Anura</taxon>
        <taxon>Pipoidea</taxon>
        <taxon>Pipidae</taxon>
        <taxon>Xenopodinae</taxon>
        <taxon>Xenopus</taxon>
        <taxon>Silurana</taxon>
    </lineage>
</organism>
<proteinExistence type="inferred from homology"/>
<evidence type="ECO:0000250" key="1"/>
<evidence type="ECO:0000250" key="2">
    <source>
        <dbReference type="UniProtKB" id="Q8TED9"/>
    </source>
</evidence>
<evidence type="ECO:0000255" key="3"/>
<evidence type="ECO:0000255" key="4">
    <source>
        <dbReference type="PROSITE-ProRule" id="PRU00145"/>
    </source>
</evidence>
<evidence type="ECO:0000256" key="5">
    <source>
        <dbReference type="SAM" id="MobiDB-lite"/>
    </source>
</evidence>